<name>PDX3_YEAST</name>
<accession>P38075</accession>
<accession>D6VQ35</accession>
<dbReference type="EC" id="1.4.3.5"/>
<dbReference type="EMBL" id="X76078">
    <property type="protein sequence ID" value="CAA53690.1"/>
    <property type="molecule type" value="Genomic_DNA"/>
</dbReference>
<dbReference type="EMBL" id="X76992">
    <property type="protein sequence ID" value="CAA54295.1"/>
    <property type="molecule type" value="Genomic_DNA"/>
</dbReference>
<dbReference type="EMBL" id="Z35904">
    <property type="protein sequence ID" value="CAA84977.1"/>
    <property type="molecule type" value="Genomic_DNA"/>
</dbReference>
<dbReference type="EMBL" id="AY557712">
    <property type="protein sequence ID" value="AAS56038.1"/>
    <property type="molecule type" value="Genomic_DNA"/>
</dbReference>
<dbReference type="EMBL" id="BK006936">
    <property type="protein sequence ID" value="DAA07155.1"/>
    <property type="molecule type" value="Genomic_DNA"/>
</dbReference>
<dbReference type="PIR" id="S41301">
    <property type="entry name" value="S41301"/>
</dbReference>
<dbReference type="RefSeq" id="NP_009591.1">
    <property type="nucleotide sequence ID" value="NM_001178383.1"/>
</dbReference>
<dbReference type="PDB" id="1CI0">
    <property type="method" value="X-ray"/>
    <property type="resolution" value="2.70 A"/>
    <property type="chains" value="A/B=1-228"/>
</dbReference>
<dbReference type="PDBsum" id="1CI0"/>
<dbReference type="SMR" id="P38075"/>
<dbReference type="BioGRID" id="32736">
    <property type="interactions" value="320"/>
</dbReference>
<dbReference type="DIP" id="DIP-4324N"/>
<dbReference type="FunCoup" id="P38075">
    <property type="interactions" value="526"/>
</dbReference>
<dbReference type="IntAct" id="P38075">
    <property type="interactions" value="48"/>
</dbReference>
<dbReference type="STRING" id="4932.YBR035C"/>
<dbReference type="iPTMnet" id="P38075"/>
<dbReference type="PaxDb" id="4932-YBR035C"/>
<dbReference type="PeptideAtlas" id="P38075"/>
<dbReference type="EnsemblFungi" id="YBR035C_mRNA">
    <property type="protein sequence ID" value="YBR035C"/>
    <property type="gene ID" value="YBR035C"/>
</dbReference>
<dbReference type="GeneID" id="852323"/>
<dbReference type="KEGG" id="sce:YBR035C"/>
<dbReference type="AGR" id="SGD:S000000239"/>
<dbReference type="SGD" id="S000000239">
    <property type="gene designation" value="PDX3"/>
</dbReference>
<dbReference type="VEuPathDB" id="FungiDB:YBR035C"/>
<dbReference type="eggNOG" id="KOG2586">
    <property type="taxonomic scope" value="Eukaryota"/>
</dbReference>
<dbReference type="GeneTree" id="ENSGT00390000011219"/>
<dbReference type="HOGENOM" id="CLU_032263_2_0_1"/>
<dbReference type="InParanoid" id="P38075"/>
<dbReference type="OMA" id="AYFRTRP"/>
<dbReference type="OrthoDB" id="303614at2759"/>
<dbReference type="BioCyc" id="MetaCyc:YBR035C-MONOMER"/>
<dbReference type="BioCyc" id="YEAST:YBR035C-MONOMER"/>
<dbReference type="Reactome" id="R-SCE-964975">
    <property type="pathway name" value="Vitamin B6 activation to pyridoxal phosphate"/>
</dbReference>
<dbReference type="UniPathway" id="UPA01068">
    <property type="reaction ID" value="UER00304"/>
</dbReference>
<dbReference type="UniPathway" id="UPA01068">
    <property type="reaction ID" value="UER00305"/>
</dbReference>
<dbReference type="BioGRID-ORCS" id="852323">
    <property type="hits" value="1 hit in 10 CRISPR screens"/>
</dbReference>
<dbReference type="EvolutionaryTrace" id="P38075"/>
<dbReference type="PRO" id="PR:P38075"/>
<dbReference type="Proteomes" id="UP000002311">
    <property type="component" value="Chromosome II"/>
</dbReference>
<dbReference type="RNAct" id="P38075">
    <property type="molecule type" value="protein"/>
</dbReference>
<dbReference type="GO" id="GO:0005758">
    <property type="term" value="C:mitochondrial intermembrane space"/>
    <property type="evidence" value="ECO:0000314"/>
    <property type="project" value="SGD"/>
</dbReference>
<dbReference type="GO" id="GO:0010181">
    <property type="term" value="F:FMN binding"/>
    <property type="evidence" value="ECO:0000314"/>
    <property type="project" value="SGD"/>
</dbReference>
<dbReference type="GO" id="GO:0004733">
    <property type="term" value="F:pyridoxamine phosphate oxidase activity"/>
    <property type="evidence" value="ECO:0000314"/>
    <property type="project" value="SGD"/>
</dbReference>
<dbReference type="GO" id="GO:0009443">
    <property type="term" value="P:pyridoxal 5'-phosphate salvage"/>
    <property type="evidence" value="ECO:0000305"/>
    <property type="project" value="SGD"/>
</dbReference>
<dbReference type="GO" id="GO:0008615">
    <property type="term" value="P:pyridoxine biosynthetic process"/>
    <property type="evidence" value="ECO:0007669"/>
    <property type="project" value="UniProtKB-KW"/>
</dbReference>
<dbReference type="FunFam" id="2.30.110.10:FF:000010">
    <property type="entry name" value="Pyridoxine phosphate oxidase"/>
    <property type="match status" value="1"/>
</dbReference>
<dbReference type="Gene3D" id="2.30.110.10">
    <property type="entry name" value="Electron Transport, Fmn-binding Protein, Chain A"/>
    <property type="match status" value="1"/>
</dbReference>
<dbReference type="HAMAP" id="MF_01629">
    <property type="entry name" value="PdxH"/>
    <property type="match status" value="1"/>
</dbReference>
<dbReference type="InterPro" id="IPR000659">
    <property type="entry name" value="Pyridox_Oxase"/>
</dbReference>
<dbReference type="InterPro" id="IPR019740">
    <property type="entry name" value="Pyridox_Oxase_CS"/>
</dbReference>
<dbReference type="InterPro" id="IPR011576">
    <property type="entry name" value="Pyridox_Oxase_N"/>
</dbReference>
<dbReference type="InterPro" id="IPR019576">
    <property type="entry name" value="Pyridoxamine_oxidase_dimer_C"/>
</dbReference>
<dbReference type="InterPro" id="IPR012349">
    <property type="entry name" value="Split_barrel_FMN-bd"/>
</dbReference>
<dbReference type="NCBIfam" id="TIGR00558">
    <property type="entry name" value="pdxH"/>
    <property type="match status" value="1"/>
</dbReference>
<dbReference type="NCBIfam" id="NF004231">
    <property type="entry name" value="PRK05679.1"/>
    <property type="match status" value="1"/>
</dbReference>
<dbReference type="PANTHER" id="PTHR10851:SF0">
    <property type="entry name" value="PYRIDOXINE-5'-PHOSPHATE OXIDASE"/>
    <property type="match status" value="1"/>
</dbReference>
<dbReference type="PANTHER" id="PTHR10851">
    <property type="entry name" value="PYRIDOXINE-5-PHOSPHATE OXIDASE"/>
    <property type="match status" value="1"/>
</dbReference>
<dbReference type="Pfam" id="PF10590">
    <property type="entry name" value="PNP_phzG_C"/>
    <property type="match status" value="1"/>
</dbReference>
<dbReference type="Pfam" id="PF01243">
    <property type="entry name" value="PNPOx_N"/>
    <property type="match status" value="1"/>
</dbReference>
<dbReference type="PIRSF" id="PIRSF000190">
    <property type="entry name" value="Pyd_amn-ph_oxd"/>
    <property type="match status" value="1"/>
</dbReference>
<dbReference type="SUPFAM" id="SSF50475">
    <property type="entry name" value="FMN-binding split barrel"/>
    <property type="match status" value="1"/>
</dbReference>
<dbReference type="PROSITE" id="PS01064">
    <property type="entry name" value="PYRIDOX_OXIDASE"/>
    <property type="match status" value="1"/>
</dbReference>
<comment type="function">
    <text>Catalyzes the oxidation of either pyridoxine 5'-phosphate (PNP) or pyridoxamine 5'-phosphate (PMP) into pyridoxal 5'-phosphate (PLP).</text>
</comment>
<comment type="catalytic activity">
    <reaction>
        <text>pyridoxamine 5'-phosphate + O2 + H2O = pyridoxal 5'-phosphate + H2O2 + NH4(+)</text>
        <dbReference type="Rhea" id="RHEA:15817"/>
        <dbReference type="ChEBI" id="CHEBI:15377"/>
        <dbReference type="ChEBI" id="CHEBI:15379"/>
        <dbReference type="ChEBI" id="CHEBI:16240"/>
        <dbReference type="ChEBI" id="CHEBI:28938"/>
        <dbReference type="ChEBI" id="CHEBI:58451"/>
        <dbReference type="ChEBI" id="CHEBI:597326"/>
        <dbReference type="EC" id="1.4.3.5"/>
    </reaction>
</comment>
<comment type="catalytic activity">
    <reaction>
        <text>pyridoxine 5'-phosphate + O2 = pyridoxal 5'-phosphate + H2O2</text>
        <dbReference type="Rhea" id="RHEA:15149"/>
        <dbReference type="ChEBI" id="CHEBI:15379"/>
        <dbReference type="ChEBI" id="CHEBI:16240"/>
        <dbReference type="ChEBI" id="CHEBI:58589"/>
        <dbReference type="ChEBI" id="CHEBI:597326"/>
        <dbReference type="EC" id="1.4.3.5"/>
    </reaction>
</comment>
<comment type="cofactor">
    <cofactor>
        <name>FMN</name>
        <dbReference type="ChEBI" id="CHEBI:58210"/>
    </cofactor>
    <text>Binds 1 FMN per subunit.</text>
</comment>
<comment type="pathway">
    <text>Cofactor metabolism; pyridoxal 5'-phosphate salvage; pyridoxal 5'-phosphate from pyridoxamine 5'-phosphate: step 1/1.</text>
</comment>
<comment type="pathway">
    <text>Cofactor metabolism; pyridoxal 5'-phosphate salvage; pyridoxal 5'-phosphate from pyridoxine 5'-phosphate: step 1/1.</text>
</comment>
<comment type="subunit">
    <text evidence="1">Homodimer.</text>
</comment>
<comment type="subcellular location">
    <subcellularLocation>
        <location evidence="5">Mitochondrion intermembrane space</location>
    </subcellularLocation>
</comment>
<comment type="similarity">
    <text evidence="7">Belongs to the pyridoxamine 5'-phosphate oxidase family.</text>
</comment>
<proteinExistence type="evidence at protein level"/>
<protein>
    <recommendedName>
        <fullName>Pyridoxamine 5'-phosphate oxidase</fullName>
        <ecNumber>1.4.3.5</ecNumber>
    </recommendedName>
    <alternativeName>
        <fullName>PNP/PMP oxidase</fullName>
        <shortName>PNPOx</shortName>
    </alternativeName>
</protein>
<keyword id="KW-0002">3D-structure</keyword>
<keyword id="KW-0285">Flavoprotein</keyword>
<keyword id="KW-0288">FMN</keyword>
<keyword id="KW-1017">Isopeptide bond</keyword>
<keyword id="KW-0496">Mitochondrion</keyword>
<keyword id="KW-0560">Oxidoreductase</keyword>
<keyword id="KW-0664">Pyridoxine biosynthesis</keyword>
<keyword id="KW-1185">Reference proteome</keyword>
<keyword id="KW-0832">Ubl conjugation</keyword>
<evidence type="ECO:0000250" key="1"/>
<evidence type="ECO:0000250" key="2">
    <source>
        <dbReference type="UniProtKB" id="P0AFI7"/>
    </source>
</evidence>
<evidence type="ECO:0000250" key="3">
    <source>
        <dbReference type="UniProtKB" id="Q9NVS9"/>
    </source>
</evidence>
<evidence type="ECO:0000269" key="4">
    <source>
    </source>
</evidence>
<evidence type="ECO:0000269" key="5">
    <source>
    </source>
</evidence>
<evidence type="ECO:0000269" key="6">
    <source ref="8"/>
</evidence>
<evidence type="ECO:0000305" key="7"/>
<evidence type="ECO:0007829" key="8">
    <source>
        <dbReference type="PDB" id="1CI0"/>
    </source>
</evidence>
<reference key="1">
    <citation type="journal article" date="1995" name="J. Bacteriol.">
        <title>Sterol uptake induced by an impairment of pyridoxal phosphate synthesis in Saccharomyces cerevisiae: cloning and sequencing of the PDX3 gene encoding pyridoxine (pyridoxamine) phosphate oxidase.</title>
        <authorList>
            <person name="Loubbardi A."/>
            <person name="Karst F."/>
            <person name="Guilloton M."/>
            <person name="Marcireau C."/>
        </authorList>
    </citation>
    <scope>NUCLEOTIDE SEQUENCE [GENOMIC DNA]</scope>
</reference>
<reference key="2">
    <citation type="journal article" date="1994" name="Yeast">
        <title>The complete sequence of a 33 kb fragment on the right arm of chromosome II from Saccharomyces cerevisiae reveals 16 open reading frames, including ten new open reading frames, five previously identified genes and a homologue of the SCO1 gene.</title>
        <authorList>
            <person name="Smits P.H.M."/>
            <person name="de Haan M."/>
            <person name="Maat C."/>
            <person name="Grivell L.A."/>
        </authorList>
    </citation>
    <scope>NUCLEOTIDE SEQUENCE [GENOMIC DNA]</scope>
    <source>
        <strain>ATCC 204508 / S288c</strain>
    </source>
</reference>
<reference key="3">
    <citation type="journal article" date="1994" name="EMBO J.">
        <title>Complete DNA sequence of yeast chromosome II.</title>
        <authorList>
            <person name="Feldmann H."/>
            <person name="Aigle M."/>
            <person name="Aljinovic G."/>
            <person name="Andre B."/>
            <person name="Baclet M.C."/>
            <person name="Barthe C."/>
            <person name="Baur A."/>
            <person name="Becam A.-M."/>
            <person name="Biteau N."/>
            <person name="Boles E."/>
            <person name="Brandt T."/>
            <person name="Brendel M."/>
            <person name="Brueckner M."/>
            <person name="Bussereau F."/>
            <person name="Christiansen C."/>
            <person name="Contreras R."/>
            <person name="Crouzet M."/>
            <person name="Cziepluch C."/>
            <person name="Demolis N."/>
            <person name="Delaveau T."/>
            <person name="Doignon F."/>
            <person name="Domdey H."/>
            <person name="Duesterhus S."/>
            <person name="Dubois E."/>
            <person name="Dujon B."/>
            <person name="El Bakkoury M."/>
            <person name="Entian K.-D."/>
            <person name="Feuermann M."/>
            <person name="Fiers W."/>
            <person name="Fobo G.M."/>
            <person name="Fritz C."/>
            <person name="Gassenhuber J."/>
            <person name="Glansdorff N."/>
            <person name="Goffeau A."/>
            <person name="Grivell L.A."/>
            <person name="de Haan M."/>
            <person name="Hein C."/>
            <person name="Herbert C.J."/>
            <person name="Hollenberg C.P."/>
            <person name="Holmstroem K."/>
            <person name="Jacq C."/>
            <person name="Jacquet M."/>
            <person name="Jauniaux J.-C."/>
            <person name="Jonniaux J.-L."/>
            <person name="Kallesoee T."/>
            <person name="Kiesau P."/>
            <person name="Kirchrath L."/>
            <person name="Koetter P."/>
            <person name="Korol S."/>
            <person name="Liebl S."/>
            <person name="Logghe M."/>
            <person name="Lohan A.J.E."/>
            <person name="Louis E.J."/>
            <person name="Li Z.Y."/>
            <person name="Maat M.J."/>
            <person name="Mallet L."/>
            <person name="Mannhaupt G."/>
            <person name="Messenguy F."/>
            <person name="Miosga T."/>
            <person name="Molemans F."/>
            <person name="Mueller S."/>
            <person name="Nasr F."/>
            <person name="Obermaier B."/>
            <person name="Perea J."/>
            <person name="Pierard A."/>
            <person name="Piravandi E."/>
            <person name="Pohl F.M."/>
            <person name="Pohl T.M."/>
            <person name="Potier S."/>
            <person name="Proft M."/>
            <person name="Purnelle B."/>
            <person name="Ramezani Rad M."/>
            <person name="Rieger M."/>
            <person name="Rose M."/>
            <person name="Schaaff-Gerstenschlaeger I."/>
            <person name="Scherens B."/>
            <person name="Schwarzlose C."/>
            <person name="Skala J."/>
            <person name="Slonimski P.P."/>
            <person name="Smits P.H.M."/>
            <person name="Souciet J.-L."/>
            <person name="Steensma H.Y."/>
            <person name="Stucka R."/>
            <person name="Urrestarazu L.A."/>
            <person name="van der Aart Q.J.M."/>
            <person name="Van Dyck L."/>
            <person name="Vassarotti A."/>
            <person name="Vetter I."/>
            <person name="Vierendeels F."/>
            <person name="Vissers S."/>
            <person name="Wagner G."/>
            <person name="de Wergifosse P."/>
            <person name="Wolfe K.H."/>
            <person name="Zagulski M."/>
            <person name="Zimmermann F.K."/>
            <person name="Mewes H.-W."/>
            <person name="Kleine K."/>
        </authorList>
    </citation>
    <scope>NUCLEOTIDE SEQUENCE [LARGE SCALE GENOMIC DNA]</scope>
    <source>
        <strain>ATCC 204508 / S288c</strain>
    </source>
</reference>
<reference key="4">
    <citation type="journal article" date="2014" name="G3 (Bethesda)">
        <title>The reference genome sequence of Saccharomyces cerevisiae: Then and now.</title>
        <authorList>
            <person name="Engel S.R."/>
            <person name="Dietrich F.S."/>
            <person name="Fisk D.G."/>
            <person name="Binkley G."/>
            <person name="Balakrishnan R."/>
            <person name="Costanzo M.C."/>
            <person name="Dwight S.S."/>
            <person name="Hitz B.C."/>
            <person name="Karra K."/>
            <person name="Nash R.S."/>
            <person name="Weng S."/>
            <person name="Wong E.D."/>
            <person name="Lloyd P."/>
            <person name="Skrzypek M.S."/>
            <person name="Miyasato S.R."/>
            <person name="Simison M."/>
            <person name="Cherry J.M."/>
        </authorList>
    </citation>
    <scope>GENOME REANNOTATION</scope>
    <source>
        <strain>ATCC 204508 / S288c</strain>
    </source>
</reference>
<reference key="5">
    <citation type="journal article" date="2007" name="Genome Res.">
        <title>Approaching a complete repository of sequence-verified protein-encoding clones for Saccharomyces cerevisiae.</title>
        <authorList>
            <person name="Hu Y."/>
            <person name="Rolfs A."/>
            <person name="Bhullar B."/>
            <person name="Murthy T.V.S."/>
            <person name="Zhu C."/>
            <person name="Berger M.F."/>
            <person name="Camargo A.A."/>
            <person name="Kelley F."/>
            <person name="McCarron S."/>
            <person name="Jepson D."/>
            <person name="Richardson A."/>
            <person name="Raphael J."/>
            <person name="Moreira D."/>
            <person name="Taycher E."/>
            <person name="Zuo D."/>
            <person name="Mohr S."/>
            <person name="Kane M.F."/>
            <person name="Williamson J."/>
            <person name="Simpson A.J.G."/>
            <person name="Bulyk M.L."/>
            <person name="Harlow E."/>
            <person name="Marsischky G."/>
            <person name="Kolodner R.D."/>
            <person name="LaBaer J."/>
        </authorList>
    </citation>
    <scope>NUCLEOTIDE SEQUENCE [GENOMIC DNA]</scope>
    <source>
        <strain>ATCC 204508 / S288c</strain>
    </source>
</reference>
<reference key="6">
    <citation type="journal article" date="2003" name="Nat. Biotechnol.">
        <title>A proteomics approach to understanding protein ubiquitination.</title>
        <authorList>
            <person name="Peng J."/>
            <person name="Schwartz D."/>
            <person name="Elias J.E."/>
            <person name="Thoreen C.C."/>
            <person name="Cheng D."/>
            <person name="Marsischky G."/>
            <person name="Roelofs J."/>
            <person name="Finley D."/>
            <person name="Gygi S.P."/>
        </authorList>
    </citation>
    <scope>UBIQUITINATION [LARGE SCALE ANALYSIS] AT LYS-29</scope>
    <scope>IDENTIFICATION BY MASS SPECTROMETRY</scope>
    <source>
        <strain>SUB592</strain>
    </source>
</reference>
<reference key="7">
    <citation type="journal article" date="2012" name="Mol. Cell. Proteomics">
        <title>Intermembrane space proteome of yeast mitochondria.</title>
        <authorList>
            <person name="Voegtle F.N."/>
            <person name="Burkhart J.M."/>
            <person name="Rao S."/>
            <person name="Gerbeth C."/>
            <person name="Hinrichs J."/>
            <person name="Martinou J.C."/>
            <person name="Chacinska A."/>
            <person name="Sickmann A."/>
            <person name="Zahedi R.P."/>
            <person name="Meisinger C."/>
        </authorList>
    </citation>
    <scope>IDENTIFICATION BY MASS SPECTROMETRY</scope>
    <scope>SUBCELLULAR LOCATION [LARGE SCALE ANALYSIS]</scope>
</reference>
<reference key="8">
    <citation type="submission" date="2005-01" db="PDB data bank">
        <title>The structure of PNP oxidase from S. cerevisiae.</title>
        <authorList>
            <consortium name="New York structural genomix research consortium (NYSGXRC)"/>
        </authorList>
    </citation>
    <scope>X-RAY CRYSTALLOGRAPHY (2.7 ANGSTROMS) IN COMPLEX WITH FMN</scope>
</reference>
<feature type="chain" id="PRO_0000167787" description="Pyridoxamine 5'-phosphate oxidase">
    <location>
        <begin position="1"/>
        <end position="228"/>
    </location>
</feature>
<feature type="binding site" evidence="2">
    <location>
        <begin position="20"/>
        <end position="23"/>
    </location>
    <ligand>
        <name>pyridoxal 5'-phosphate</name>
        <dbReference type="ChEBI" id="CHEBI:597326"/>
    </ligand>
</feature>
<feature type="binding site" evidence="6">
    <location>
        <begin position="73"/>
        <end position="76"/>
    </location>
    <ligand>
        <name>FMN</name>
        <dbReference type="ChEBI" id="CHEBI:58210"/>
    </ligand>
</feature>
<feature type="binding site" evidence="3">
    <location>
        <position position="78"/>
    </location>
    <ligand>
        <name>pyridoxal 5'-phosphate</name>
        <dbReference type="ChEBI" id="CHEBI:597326"/>
    </ligand>
</feature>
<feature type="binding site" evidence="6">
    <location>
        <begin position="88"/>
        <end position="89"/>
    </location>
    <ligand>
        <name>FMN</name>
        <dbReference type="ChEBI" id="CHEBI:58210"/>
    </ligand>
</feature>
<feature type="binding site" evidence="6">
    <location>
        <begin position="95"/>
        <end position="96"/>
    </location>
    <ligand>
        <name>FMN</name>
        <dbReference type="ChEBI" id="CHEBI:58210"/>
    </ligand>
</feature>
<feature type="binding site" evidence="2">
    <location>
        <position position="118"/>
    </location>
    <ligand>
        <name>FMN</name>
        <dbReference type="ChEBI" id="CHEBI:58210"/>
    </ligand>
</feature>
<feature type="binding site" evidence="3">
    <location>
        <position position="136"/>
    </location>
    <ligand>
        <name>pyridoxal 5'-phosphate</name>
        <dbReference type="ChEBI" id="CHEBI:597326"/>
    </ligand>
</feature>
<feature type="binding site" evidence="3">
    <location>
        <position position="140"/>
    </location>
    <ligand>
        <name>pyridoxal 5'-phosphate</name>
        <dbReference type="ChEBI" id="CHEBI:597326"/>
    </ligand>
</feature>
<feature type="binding site" evidence="3">
    <location>
        <position position="144"/>
    </location>
    <ligand>
        <name>pyridoxal 5'-phosphate</name>
        <dbReference type="ChEBI" id="CHEBI:597326"/>
    </ligand>
</feature>
<feature type="binding site" evidence="6">
    <location>
        <begin position="153"/>
        <end position="154"/>
    </location>
    <ligand>
        <name>FMN</name>
        <dbReference type="ChEBI" id="CHEBI:58210"/>
    </ligand>
</feature>
<feature type="binding site" evidence="2">
    <location>
        <position position="199"/>
    </location>
    <ligand>
        <name>FMN</name>
        <dbReference type="ChEBI" id="CHEBI:58210"/>
    </ligand>
</feature>
<feature type="binding site" evidence="2">
    <location>
        <begin position="205"/>
        <end position="207"/>
    </location>
    <ligand>
        <name>pyridoxal 5'-phosphate</name>
        <dbReference type="ChEBI" id="CHEBI:597326"/>
    </ligand>
</feature>
<feature type="binding site" evidence="2">
    <location>
        <position position="209"/>
    </location>
    <ligand>
        <name>FMN</name>
        <dbReference type="ChEBI" id="CHEBI:58210"/>
    </ligand>
</feature>
<feature type="cross-link" description="Glycyl lysine isopeptide (Lys-Gly) (interchain with G-Cter in ubiquitin)" evidence="4">
    <location>
        <position position="29"/>
    </location>
</feature>
<feature type="helix" evidence="8">
    <location>
        <begin position="28"/>
        <end position="30"/>
    </location>
</feature>
<feature type="helix" evidence="8">
    <location>
        <begin position="35"/>
        <end position="48"/>
    </location>
</feature>
<feature type="strand" evidence="8">
    <location>
        <begin position="57"/>
        <end position="64"/>
    </location>
</feature>
<feature type="turn" evidence="8">
    <location>
        <begin position="65"/>
        <end position="68"/>
    </location>
</feature>
<feature type="strand" evidence="8">
    <location>
        <begin position="69"/>
        <end position="76"/>
    </location>
</feature>
<feature type="strand" evidence="8">
    <location>
        <begin position="82"/>
        <end position="90"/>
    </location>
</feature>
<feature type="strand" evidence="8">
    <location>
        <begin position="92"/>
        <end position="94"/>
    </location>
</feature>
<feature type="helix" evidence="8">
    <location>
        <begin position="95"/>
        <end position="102"/>
    </location>
</feature>
<feature type="strand" evidence="8">
    <location>
        <begin position="105"/>
        <end position="112"/>
    </location>
</feature>
<feature type="turn" evidence="8">
    <location>
        <begin position="113"/>
        <end position="116"/>
    </location>
</feature>
<feature type="strand" evidence="8">
    <location>
        <begin position="117"/>
        <end position="127"/>
    </location>
</feature>
<feature type="helix" evidence="8">
    <location>
        <begin position="130"/>
        <end position="139"/>
    </location>
</feature>
<feature type="helix" evidence="8">
    <location>
        <begin position="142"/>
        <end position="150"/>
    </location>
</feature>
<feature type="strand" evidence="8">
    <location>
        <begin position="156"/>
        <end position="158"/>
    </location>
</feature>
<feature type="helix" evidence="8">
    <location>
        <begin position="160"/>
        <end position="173"/>
    </location>
</feature>
<feature type="strand" evidence="8">
    <location>
        <begin position="186"/>
        <end position="200"/>
    </location>
</feature>
<feature type="strand" evidence="8">
    <location>
        <begin position="208"/>
        <end position="213"/>
    </location>
</feature>
<feature type="strand" evidence="8">
    <location>
        <begin position="222"/>
        <end position="226"/>
    </location>
</feature>
<organism>
    <name type="scientific">Saccharomyces cerevisiae (strain ATCC 204508 / S288c)</name>
    <name type="common">Baker's yeast</name>
    <dbReference type="NCBI Taxonomy" id="559292"/>
    <lineage>
        <taxon>Eukaryota</taxon>
        <taxon>Fungi</taxon>
        <taxon>Dikarya</taxon>
        <taxon>Ascomycota</taxon>
        <taxon>Saccharomycotina</taxon>
        <taxon>Saccharomycetes</taxon>
        <taxon>Saccharomycetales</taxon>
        <taxon>Saccharomycetaceae</taxon>
        <taxon>Saccharomyces</taxon>
    </lineage>
</organism>
<sequence>MTKQAEETQKPIIFAPETYQYDKFTLNEKQLTDDPIDLFTKWFNEAKEDPRETLPEAITFSSAELPSGRVSSRILLFKELDHRGFTIYSNWGTSRKAHDIATNPNAAIVFFWKDLQRQVRVEGITEHVNRETSERYFKTRPRGSKIGAWASRQSDVIKNREELDELTQKNTERFKDAEDIPCPDYWGGLRIVPLEIEFWQGRPSRLHDRFVYRRKTENDPWKVVRLAP</sequence>
<gene>
    <name type="primary">PDX3</name>
    <name type="ordered locus">YBR035C</name>
    <name type="ORF">YBR0321</name>
</gene>